<dbReference type="EC" id="7.1.1.9"/>
<dbReference type="EMBL" id="J01435">
    <property type="protein sequence ID" value="AAD15020.1"/>
    <property type="molecule type" value="Genomic_DNA"/>
</dbReference>
<dbReference type="EMBL" id="M27315">
    <property type="protein sequence ID" value="AAB00994.1"/>
    <property type="molecule type" value="Genomic_DNA"/>
</dbReference>
<dbReference type="EMBL" id="X14848">
    <property type="protein sequence ID" value="CAA32960.1"/>
    <property type="molecule type" value="Genomic_DNA"/>
</dbReference>
<dbReference type="EMBL" id="AY172581">
    <property type="protein sequence ID" value="AAN77600.1"/>
    <property type="molecule type" value="Genomic_DNA"/>
</dbReference>
<dbReference type="PIR" id="S04753">
    <property type="entry name" value="S04753"/>
</dbReference>
<dbReference type="RefSeq" id="AP_004898.1">
    <property type="nucleotide sequence ID" value="AC_000022.2"/>
</dbReference>
<dbReference type="SMR" id="P05505"/>
<dbReference type="CORUM" id="P05505"/>
<dbReference type="FunCoup" id="P05505">
    <property type="interactions" value="50"/>
</dbReference>
<dbReference type="STRING" id="10116.ENSRNOP00000051326"/>
<dbReference type="CarbonylDB" id="P05505"/>
<dbReference type="iPTMnet" id="P05505"/>
<dbReference type="PhosphoSitePlus" id="P05505"/>
<dbReference type="PaxDb" id="10116-ENSRNOP00000051326"/>
<dbReference type="Ensembl" id="ENSRNOT00000049683.3">
    <property type="protein sequence ID" value="ENSRNOP00000051326.3"/>
    <property type="gene ID" value="ENSRNOG00000030700.3"/>
</dbReference>
<dbReference type="KEGG" id="rno:26204"/>
<dbReference type="AGR" id="RGD:621873"/>
<dbReference type="CTD" id="4514"/>
<dbReference type="RGD" id="621873">
    <property type="gene designation" value="Mt-co3"/>
</dbReference>
<dbReference type="eggNOG" id="KOG4664">
    <property type="taxonomic scope" value="Eukaryota"/>
</dbReference>
<dbReference type="GeneTree" id="ENSGT00390000013064"/>
<dbReference type="HOGENOM" id="CLU_044071_0_0_1"/>
<dbReference type="InParanoid" id="P05505"/>
<dbReference type="OMA" id="SIYWWGS"/>
<dbReference type="OrthoDB" id="9060at9989"/>
<dbReference type="PhylomeDB" id="P05505"/>
<dbReference type="TreeFam" id="TF343435"/>
<dbReference type="Reactome" id="R-RNO-5628897">
    <property type="pathway name" value="TP53 Regulates Metabolic Genes"/>
</dbReference>
<dbReference type="Reactome" id="R-RNO-611105">
    <property type="pathway name" value="Respiratory electron transport"/>
</dbReference>
<dbReference type="Reactome" id="R-RNO-9707564">
    <property type="pathway name" value="Cytoprotection by HMOX1"/>
</dbReference>
<dbReference type="PRO" id="PR:P05505"/>
<dbReference type="Proteomes" id="UP000002494">
    <property type="component" value="Mitochondrion"/>
</dbReference>
<dbReference type="Bgee" id="ENSRNOG00000030700">
    <property type="expression patterns" value="Expressed in heart and 18 other cell types or tissues"/>
</dbReference>
<dbReference type="ExpressionAtlas" id="P05505">
    <property type="expression patterns" value="baseline and differential"/>
</dbReference>
<dbReference type="GO" id="GO:0005743">
    <property type="term" value="C:mitochondrial inner membrane"/>
    <property type="evidence" value="ECO:0000266"/>
    <property type="project" value="RGD"/>
</dbReference>
<dbReference type="GO" id="GO:0031966">
    <property type="term" value="C:mitochondrial membrane"/>
    <property type="evidence" value="ECO:0000266"/>
    <property type="project" value="RGD"/>
</dbReference>
<dbReference type="GO" id="GO:0005739">
    <property type="term" value="C:mitochondrion"/>
    <property type="evidence" value="ECO:0000318"/>
    <property type="project" value="GO_Central"/>
</dbReference>
<dbReference type="GO" id="GO:0045277">
    <property type="term" value="C:respiratory chain complex IV"/>
    <property type="evidence" value="ECO:0000250"/>
    <property type="project" value="UniProtKB"/>
</dbReference>
<dbReference type="GO" id="GO:0004129">
    <property type="term" value="F:cytochrome-c oxidase activity"/>
    <property type="evidence" value="ECO:0007669"/>
    <property type="project" value="UniProtKB-EC"/>
</dbReference>
<dbReference type="GO" id="GO:0006123">
    <property type="term" value="P:mitochondrial electron transport, cytochrome c to oxygen"/>
    <property type="evidence" value="ECO:0000318"/>
    <property type="project" value="GO_Central"/>
</dbReference>
<dbReference type="GO" id="GO:0008535">
    <property type="term" value="P:respiratory chain complex IV assembly"/>
    <property type="evidence" value="ECO:0000250"/>
    <property type="project" value="UniProtKB"/>
</dbReference>
<dbReference type="CDD" id="cd01665">
    <property type="entry name" value="Cyt_c_Oxidase_III"/>
    <property type="match status" value="1"/>
</dbReference>
<dbReference type="FunFam" id="1.10.287.70:FF:000048">
    <property type="entry name" value="Cytochrome c oxidase subunit 3"/>
    <property type="match status" value="1"/>
</dbReference>
<dbReference type="FunFam" id="1.20.120.80:FF:000002">
    <property type="entry name" value="Cytochrome c oxidase subunit 3"/>
    <property type="match status" value="1"/>
</dbReference>
<dbReference type="Gene3D" id="1.10.287.70">
    <property type="match status" value="1"/>
</dbReference>
<dbReference type="Gene3D" id="1.20.120.80">
    <property type="entry name" value="Cytochrome c oxidase, subunit III, four-helix bundle"/>
    <property type="match status" value="1"/>
</dbReference>
<dbReference type="InterPro" id="IPR024791">
    <property type="entry name" value="Cyt_c/ubiquinol_Oxase_su3"/>
</dbReference>
<dbReference type="InterPro" id="IPR033945">
    <property type="entry name" value="Cyt_c_oxase_su3_dom"/>
</dbReference>
<dbReference type="InterPro" id="IPR000298">
    <property type="entry name" value="Cyt_c_oxidase-like_su3"/>
</dbReference>
<dbReference type="InterPro" id="IPR035973">
    <property type="entry name" value="Cyt_c_oxidase_su3-like_sf"/>
</dbReference>
<dbReference type="InterPro" id="IPR013833">
    <property type="entry name" value="Cyt_c_oxidase_su3_a-hlx"/>
</dbReference>
<dbReference type="PANTHER" id="PTHR11403:SF7">
    <property type="entry name" value="CYTOCHROME C OXIDASE SUBUNIT 3"/>
    <property type="match status" value="1"/>
</dbReference>
<dbReference type="PANTHER" id="PTHR11403">
    <property type="entry name" value="CYTOCHROME C OXIDASE SUBUNIT III"/>
    <property type="match status" value="1"/>
</dbReference>
<dbReference type="Pfam" id="PF00510">
    <property type="entry name" value="COX3"/>
    <property type="match status" value="1"/>
</dbReference>
<dbReference type="SUPFAM" id="SSF81452">
    <property type="entry name" value="Cytochrome c oxidase subunit III-like"/>
    <property type="match status" value="1"/>
</dbReference>
<dbReference type="PROSITE" id="PS50253">
    <property type="entry name" value="COX3"/>
    <property type="match status" value="1"/>
</dbReference>
<keyword id="KW-0903">Direct protein sequencing</keyword>
<keyword id="KW-0472">Membrane</keyword>
<keyword id="KW-0496">Mitochondrion</keyword>
<keyword id="KW-0999">Mitochondrion inner membrane</keyword>
<keyword id="KW-1185">Reference proteome</keyword>
<keyword id="KW-1278">Translocase</keyword>
<keyword id="KW-0812">Transmembrane</keyword>
<keyword id="KW-1133">Transmembrane helix</keyword>
<gene>
    <name evidence="5" type="primary">Mt-co3</name>
    <name type="synonym">Coiii</name>
    <name type="synonym">Mtco3</name>
</gene>
<protein>
    <recommendedName>
        <fullName>Cytochrome c oxidase subunit 3</fullName>
        <ecNumber>7.1.1.9</ecNumber>
    </recommendedName>
    <alternativeName>
        <fullName>Cytochrome c oxidase polypeptide III</fullName>
    </alternativeName>
</protein>
<reference key="1">
    <citation type="journal article" date="1981" name="Curr. Genet.">
        <title>Analysis of a DNA segment from rat liver mitochondria containing the genes for the cytochrome oxidase subunits I, II and III, ATPase subunit 6, and several tRNA genes.</title>
        <authorList>
            <person name="Grosskopf R."/>
            <person name="Feldmann H."/>
        </authorList>
    </citation>
    <scope>NUCLEOTIDE SEQUENCE [GENOMIC DNA]</scope>
    <source>
        <strain>Sprague-Dawley</strain>
        <tissue>Liver</tissue>
    </source>
</reference>
<reference key="2">
    <citation type="journal article" date="1983" name="Biochem. Int.">
        <title>Non-random patterns of nucleotide substitutions and codon strategy in the mammalian mitochondrial genes coding for identified and unidentified reading frames.</title>
        <authorList>
            <person name="Pepe G."/>
            <person name="Holtrop M."/>
            <person name="Gadaleta G."/>
            <person name="Kroon A.M."/>
            <person name="Cantatore P."/>
            <person name="Gallerani R."/>
            <person name="de Benedetto C."/>
            <person name="Quagliariello C."/>
            <person name="Sbisa E."/>
            <person name="Saccone C."/>
        </authorList>
    </citation>
    <scope>NUCLEOTIDE SEQUENCE [GENOMIC DNA]</scope>
    <source>
        <strain>Wistar</strain>
    </source>
</reference>
<reference key="3">
    <citation type="journal article" date="1989" name="J. Mol. Evol.">
        <title>The complete nucleotide sequence of the Rattus norvegicus mitochondrial genome: cryptic signals revealed by comparative analysis between vertebrates.</title>
        <authorList>
            <person name="Gadaleta G."/>
            <person name="Pepe G."/>
            <person name="de Candia G."/>
            <person name="Quagliariello C."/>
            <person name="Sbisa E."/>
            <person name="Saccone C."/>
        </authorList>
    </citation>
    <scope>NUCLEOTIDE SEQUENCE [GENOMIC DNA]</scope>
    <source>
        <strain>Wistar</strain>
    </source>
</reference>
<reference key="4">
    <citation type="journal article" date="2004" name="Nature">
        <title>Genome sequence of the Brown Norway rat yields insights into mammalian evolution.</title>
        <authorList>
            <person name="Gibbs R.A."/>
            <person name="Weinstock G.M."/>
            <person name="Metzker M.L."/>
            <person name="Muzny D.M."/>
            <person name="Sodergren E.J."/>
            <person name="Scherer S."/>
            <person name="Scott G."/>
            <person name="Steffen D."/>
            <person name="Worley K.C."/>
            <person name="Burch P.E."/>
            <person name="Okwuonu G."/>
            <person name="Hines S."/>
            <person name="Lewis L."/>
            <person name="Deramo C."/>
            <person name="Delgado O."/>
            <person name="Dugan-Rocha S."/>
            <person name="Miner G."/>
            <person name="Morgan M."/>
            <person name="Hawes A."/>
            <person name="Gill R."/>
            <person name="Holt R.A."/>
            <person name="Adams M.D."/>
            <person name="Amanatides P.G."/>
            <person name="Baden-Tillson H."/>
            <person name="Barnstead M."/>
            <person name="Chin S."/>
            <person name="Evans C.A."/>
            <person name="Ferriera S."/>
            <person name="Fosler C."/>
            <person name="Glodek A."/>
            <person name="Gu Z."/>
            <person name="Jennings D."/>
            <person name="Kraft C.L."/>
            <person name="Nguyen T."/>
            <person name="Pfannkoch C.M."/>
            <person name="Sitter C."/>
            <person name="Sutton G.G."/>
            <person name="Venter J.C."/>
            <person name="Woodage T."/>
            <person name="Smith D."/>
            <person name="Lee H.-M."/>
            <person name="Gustafson E."/>
            <person name="Cahill P."/>
            <person name="Kana A."/>
            <person name="Doucette-Stamm L."/>
            <person name="Weinstock K."/>
            <person name="Fechtel K."/>
            <person name="Weiss R.B."/>
            <person name="Dunn D.M."/>
            <person name="Green E.D."/>
            <person name="Blakesley R.W."/>
            <person name="Bouffard G.G."/>
            <person name="De Jong P.J."/>
            <person name="Osoegawa K."/>
            <person name="Zhu B."/>
            <person name="Marra M."/>
            <person name="Schein J."/>
            <person name="Bosdet I."/>
            <person name="Fjell C."/>
            <person name="Jones S."/>
            <person name="Krzywinski M."/>
            <person name="Mathewson C."/>
            <person name="Siddiqui A."/>
            <person name="Wye N."/>
            <person name="McPherson J."/>
            <person name="Zhao S."/>
            <person name="Fraser C.M."/>
            <person name="Shetty J."/>
            <person name="Shatsman S."/>
            <person name="Geer K."/>
            <person name="Chen Y."/>
            <person name="Abramzon S."/>
            <person name="Nierman W.C."/>
            <person name="Havlak P.H."/>
            <person name="Chen R."/>
            <person name="Durbin K.J."/>
            <person name="Egan A."/>
            <person name="Ren Y."/>
            <person name="Song X.-Z."/>
            <person name="Li B."/>
            <person name="Liu Y."/>
            <person name="Qin X."/>
            <person name="Cawley S."/>
            <person name="Cooney A.J."/>
            <person name="D'Souza L.M."/>
            <person name="Martin K."/>
            <person name="Wu J.Q."/>
            <person name="Gonzalez-Garay M.L."/>
            <person name="Jackson A.R."/>
            <person name="Kalafus K.J."/>
            <person name="McLeod M.P."/>
            <person name="Milosavljevic A."/>
            <person name="Virk D."/>
            <person name="Volkov A."/>
            <person name="Wheeler D.A."/>
            <person name="Zhang Z."/>
            <person name="Bailey J.A."/>
            <person name="Eichler E.E."/>
            <person name="Tuzun E."/>
            <person name="Birney E."/>
            <person name="Mongin E."/>
            <person name="Ureta-Vidal A."/>
            <person name="Woodwark C."/>
            <person name="Zdobnov E."/>
            <person name="Bork P."/>
            <person name="Suyama M."/>
            <person name="Torrents D."/>
            <person name="Alexandersson M."/>
            <person name="Trask B.J."/>
            <person name="Young J.M."/>
            <person name="Huang H."/>
            <person name="Wang H."/>
            <person name="Xing H."/>
            <person name="Daniels S."/>
            <person name="Gietzen D."/>
            <person name="Schmidt J."/>
            <person name="Stevens K."/>
            <person name="Vitt U."/>
            <person name="Wingrove J."/>
            <person name="Camara F."/>
            <person name="Mar Alba M."/>
            <person name="Abril J.F."/>
            <person name="Guigo R."/>
            <person name="Smit A."/>
            <person name="Dubchak I."/>
            <person name="Rubin E.M."/>
            <person name="Couronne O."/>
            <person name="Poliakov A."/>
            <person name="Huebner N."/>
            <person name="Ganten D."/>
            <person name="Goesele C."/>
            <person name="Hummel O."/>
            <person name="Kreitler T."/>
            <person name="Lee Y.-A."/>
            <person name="Monti J."/>
            <person name="Schulz H."/>
            <person name="Zimdahl H."/>
            <person name="Himmelbauer H."/>
            <person name="Lehrach H."/>
            <person name="Jacob H.J."/>
            <person name="Bromberg S."/>
            <person name="Gullings-Handley J."/>
            <person name="Jensen-Seaman M.I."/>
            <person name="Kwitek A.E."/>
            <person name="Lazar J."/>
            <person name="Pasko D."/>
            <person name="Tonellato P.J."/>
            <person name="Twigger S."/>
            <person name="Ponting C.P."/>
            <person name="Duarte J.M."/>
            <person name="Rice S."/>
            <person name="Goodstadt L."/>
            <person name="Beatson S.A."/>
            <person name="Emes R.D."/>
            <person name="Winter E.E."/>
            <person name="Webber C."/>
            <person name="Brandt P."/>
            <person name="Nyakatura G."/>
            <person name="Adetobi M."/>
            <person name="Chiaromonte F."/>
            <person name="Elnitski L."/>
            <person name="Eswara P."/>
            <person name="Hardison R.C."/>
            <person name="Hou M."/>
            <person name="Kolbe D."/>
            <person name="Makova K."/>
            <person name="Miller W."/>
            <person name="Nekrutenko A."/>
            <person name="Riemer C."/>
            <person name="Schwartz S."/>
            <person name="Taylor J."/>
            <person name="Yang S."/>
            <person name="Zhang Y."/>
            <person name="Lindpaintner K."/>
            <person name="Andrews T.D."/>
            <person name="Caccamo M."/>
            <person name="Clamp M."/>
            <person name="Clarke L."/>
            <person name="Curwen V."/>
            <person name="Durbin R.M."/>
            <person name="Eyras E."/>
            <person name="Searle S.M."/>
            <person name="Cooper G.M."/>
            <person name="Batzoglou S."/>
            <person name="Brudno M."/>
            <person name="Sidow A."/>
            <person name="Stone E.A."/>
            <person name="Payseur B.A."/>
            <person name="Bourque G."/>
            <person name="Lopez-Otin C."/>
            <person name="Puente X.S."/>
            <person name="Chakrabarti K."/>
            <person name="Chatterji S."/>
            <person name="Dewey C."/>
            <person name="Pachter L."/>
            <person name="Bray N."/>
            <person name="Yap V.B."/>
            <person name="Caspi A."/>
            <person name="Tesler G."/>
            <person name="Pevzner P.A."/>
            <person name="Haussler D."/>
            <person name="Roskin K.M."/>
            <person name="Baertsch R."/>
            <person name="Clawson H."/>
            <person name="Furey T.S."/>
            <person name="Hinrichs A.S."/>
            <person name="Karolchik D."/>
            <person name="Kent W.J."/>
            <person name="Rosenbloom K.R."/>
            <person name="Trumbower H."/>
            <person name="Weirauch M."/>
            <person name="Cooper D.N."/>
            <person name="Stenson P.D."/>
            <person name="Ma B."/>
            <person name="Brent M."/>
            <person name="Arumugam M."/>
            <person name="Shteynberg D."/>
            <person name="Copley R.R."/>
            <person name="Taylor M.S."/>
            <person name="Riethman H."/>
            <person name="Mudunuri U."/>
            <person name="Peterson J."/>
            <person name="Guyer M."/>
            <person name="Felsenfeld A."/>
            <person name="Old S."/>
            <person name="Mockrin S."/>
            <person name="Collins F.S."/>
        </authorList>
    </citation>
    <scope>NUCLEOTIDE SEQUENCE [LARGE SCALE GENOMIC DNA]</scope>
    <source>
        <strain>Brown Norway</strain>
    </source>
</reference>
<reference key="5">
    <citation type="journal article" date="1995" name="Eur. J. Biochem.">
        <title>Cytochrome-c oxidase in developing rat heart. Enzymic properties and amino-terminal sequences suggest identity of the fetal heart and the adult liver isoform.</title>
        <authorList>
            <person name="Schaegger H."/>
            <person name="Noack H."/>
            <person name="Halangk W."/>
            <person name="Brandt U."/>
            <person name="von Jagow G."/>
        </authorList>
    </citation>
    <scope>PROTEIN SEQUENCE OF 2-11</scope>
    <source>
        <strain>Wistar</strain>
        <tissue>Liver</tissue>
    </source>
</reference>
<proteinExistence type="evidence at protein level"/>
<organism>
    <name type="scientific">Rattus norvegicus</name>
    <name type="common">Rat</name>
    <dbReference type="NCBI Taxonomy" id="10116"/>
    <lineage>
        <taxon>Eukaryota</taxon>
        <taxon>Metazoa</taxon>
        <taxon>Chordata</taxon>
        <taxon>Craniata</taxon>
        <taxon>Vertebrata</taxon>
        <taxon>Euteleostomi</taxon>
        <taxon>Mammalia</taxon>
        <taxon>Eutheria</taxon>
        <taxon>Euarchontoglires</taxon>
        <taxon>Glires</taxon>
        <taxon>Rodentia</taxon>
        <taxon>Myomorpha</taxon>
        <taxon>Muroidea</taxon>
        <taxon>Muridae</taxon>
        <taxon>Murinae</taxon>
        <taxon>Rattus</taxon>
    </lineage>
</organism>
<name>COX3_RAT</name>
<comment type="function">
    <text evidence="2">Component of the cytochrome c oxidase, the last enzyme in the mitochondrial electron transport chain which drives oxidative phosphorylation. The respiratory chain contains 3 multisubunit complexes succinate dehydrogenase (complex II, CII), ubiquinol-cytochrome c oxidoreductase (cytochrome b-c1 complex, complex III, CIII) and cytochrome c oxidase (complex IV, CIV), that cooperate to transfer electrons derived from NADH and succinate to molecular oxygen, creating an electrochemical gradient over the inner membrane that drives transmembrane transport and the ATP synthase. Cytochrome c oxidase is the component of the respiratory chain that catalyzes the reduction of oxygen to water. Electrons originating from reduced cytochrome c in the intermembrane space (IMS) are transferred via the dinuclear copper A center (CU(A)) of subunit 2 and heme A of subunit 1 to the active site in subunit 1, a binuclear center (BNC) formed by heme A3 and copper B (CU(B)). The BNC reduces molecular oxygen to 2 water molecules using 4 electrons from cytochrome c in the IMS and 4 protons from the mitochondrial matrix.</text>
</comment>
<comment type="catalytic activity">
    <reaction evidence="2">
        <text>4 Fe(II)-[cytochrome c] + O2 + 8 H(+)(in) = 4 Fe(III)-[cytochrome c] + 2 H2O + 4 H(+)(out)</text>
        <dbReference type="Rhea" id="RHEA:11436"/>
        <dbReference type="Rhea" id="RHEA-COMP:10350"/>
        <dbReference type="Rhea" id="RHEA-COMP:14399"/>
        <dbReference type="ChEBI" id="CHEBI:15377"/>
        <dbReference type="ChEBI" id="CHEBI:15378"/>
        <dbReference type="ChEBI" id="CHEBI:15379"/>
        <dbReference type="ChEBI" id="CHEBI:29033"/>
        <dbReference type="ChEBI" id="CHEBI:29034"/>
        <dbReference type="EC" id="7.1.1.9"/>
    </reaction>
    <physiologicalReaction direction="left-to-right" evidence="2">
        <dbReference type="Rhea" id="RHEA:11437"/>
    </physiologicalReaction>
</comment>
<comment type="subunit">
    <text evidence="1">Component of the cytochrome c oxidase (complex IV, CIV), a multisubunit enzyme composed of 14 subunits. The complex is composed of a catalytic core of 3 subunits MT-CO1, MT-CO2 and MT-CO3, encoded in the mitochondrial DNA, and 11 supernumerary subunits COX4I, COX5A, COX5B, COX6A, COX6B, COX6C, COX7A, COX7B, COX7C, COX8 and NDUFA4, which are encoded in the nuclear genome. The complex exists as a monomer or a dimer and forms supercomplexes (SCs) in the inner mitochondrial membrane with NADH-ubiquinone oxidoreductase (complex I, CI) and ubiquinol-cytochrome c oxidoreductase (cytochrome b-c1 complex, complex III, CIII), resulting in different assemblies (supercomplex SCI(1)III(2)IV(1) and megacomplex MCI(2)III(2)IV(2)).</text>
</comment>
<comment type="subcellular location">
    <subcellularLocation>
        <location evidence="1">Mitochondrion inner membrane</location>
        <topology evidence="1">Multi-pass membrane protein</topology>
    </subcellularLocation>
</comment>
<comment type="similarity">
    <text evidence="4">Belongs to the cytochrome c oxidase subunit 3 family.</text>
</comment>
<geneLocation type="mitochondrion"/>
<sequence length="261" mass="29871">MTHQTHAYHMVNPSPWPLTGALSALLLTSGLVMWFHYNSTILLSLGLLTNILTMYQWWRDIIREGTYQGHHTPIVQKGLRYGMILFIVSEVFFFAGFFWAFYHSSLVPTHDLGGCWPPTGITPLNPLEVPLLNTSVLLASGVSITWAHHSLMEGNRNHMNQALLITILLGLYFTILQASEYFETSFSISDGIYGSTFFMATGFHGLHVIIGSTFLIVCLLRQLKFHFTSKHHFGFEAAAWYWHFVDVVWLFLYVSIYWWGS</sequence>
<evidence type="ECO:0000250" key="1">
    <source>
        <dbReference type="UniProtKB" id="P00415"/>
    </source>
</evidence>
<evidence type="ECO:0000250" key="2">
    <source>
        <dbReference type="UniProtKB" id="P00420"/>
    </source>
</evidence>
<evidence type="ECO:0000269" key="3">
    <source>
    </source>
</evidence>
<evidence type="ECO:0000305" key="4"/>
<evidence type="ECO:0000312" key="5">
    <source>
        <dbReference type="RGD" id="621873"/>
    </source>
</evidence>
<feature type="initiator methionine" description="Removed" evidence="3">
    <location>
        <position position="1"/>
    </location>
</feature>
<feature type="chain" id="PRO_0000183844" description="Cytochrome c oxidase subunit 3">
    <location>
        <begin position="2"/>
        <end position="261"/>
    </location>
</feature>
<feature type="topological domain" description="Mitochondrial matrix" evidence="1">
    <location>
        <begin position="2"/>
        <end position="15"/>
    </location>
</feature>
<feature type="transmembrane region" description="Helical; Name=I" evidence="1">
    <location>
        <begin position="16"/>
        <end position="34"/>
    </location>
</feature>
<feature type="topological domain" description="Mitochondrial intermembrane" evidence="1">
    <location>
        <begin position="35"/>
        <end position="40"/>
    </location>
</feature>
<feature type="transmembrane region" description="Helical; Name=II" evidence="1">
    <location>
        <begin position="41"/>
        <end position="66"/>
    </location>
</feature>
<feature type="topological domain" description="Mitochondrial matrix" evidence="1">
    <location>
        <begin position="67"/>
        <end position="72"/>
    </location>
</feature>
<feature type="transmembrane region" description="Helical; Name=III" evidence="1">
    <location>
        <begin position="73"/>
        <end position="105"/>
    </location>
</feature>
<feature type="topological domain" description="Mitochondrial intermembrane" evidence="1">
    <location>
        <begin position="106"/>
        <end position="128"/>
    </location>
</feature>
<feature type="transmembrane region" description="Helical; Name=IV" evidence="1">
    <location>
        <begin position="129"/>
        <end position="152"/>
    </location>
</feature>
<feature type="topological domain" description="Mitochondrial matrix" evidence="1">
    <location>
        <begin position="153"/>
        <end position="155"/>
    </location>
</feature>
<feature type="transmembrane region" description="Helical; Name=V" evidence="1">
    <location>
        <begin position="156"/>
        <end position="183"/>
    </location>
</feature>
<feature type="topological domain" description="Mitochondrial intermembrane" evidence="1">
    <location>
        <begin position="184"/>
        <end position="190"/>
    </location>
</feature>
<feature type="transmembrane region" description="Helical; Name=VI" evidence="1">
    <location>
        <begin position="191"/>
        <end position="223"/>
    </location>
</feature>
<feature type="topological domain" description="Mitochondrial matrix" evidence="1">
    <location>
        <begin position="224"/>
        <end position="232"/>
    </location>
</feature>
<feature type="transmembrane region" description="Helical; Name=VII" evidence="1">
    <location>
        <begin position="233"/>
        <end position="256"/>
    </location>
</feature>
<feature type="topological domain" description="Mitochondrial intermembrane" evidence="1">
    <location>
        <begin position="257"/>
        <end position="261"/>
    </location>
</feature>
<feature type="sequence conflict" description="In Ref. 5; AA sequence." evidence="4" ref="5">
    <original>T</original>
    <variation>S</variation>
    <location>
        <position position="2"/>
    </location>
</feature>
<accession>P05505</accession>